<gene>
    <name evidence="1" type="primary">mutS</name>
    <name type="ordered locus">BQ00930</name>
</gene>
<feature type="chain" id="PRO_0000224352" description="DNA mismatch repair protein MutS">
    <location>
        <begin position="1"/>
        <end position="911"/>
    </location>
</feature>
<feature type="region of interest" description="Disordered" evidence="2">
    <location>
        <begin position="1"/>
        <end position="24"/>
    </location>
</feature>
<feature type="compositionally biased region" description="Basic and acidic residues" evidence="2">
    <location>
        <begin position="1"/>
        <end position="10"/>
    </location>
</feature>
<feature type="binding site" evidence="1">
    <location>
        <begin position="662"/>
        <end position="669"/>
    </location>
    <ligand>
        <name>ATP</name>
        <dbReference type="ChEBI" id="CHEBI:30616"/>
    </ligand>
</feature>
<sequence length="911" mass="101798">MDNKTDHKNDLNSQPVPSSAPHKERLTPMMEQYIEIKAVNSDSLLFYRMGDFYELFFNDAIEAAQVLGITLTTRGKHLGEDIPMCGVPVHAADDYLQKLISSGYRVAVCEQTEDPAEAKKRGSKSIVRRDVVRLVTPGTITEEKLLDPTRANYLMTLARIKTSKGEEFALSWIDISTGIFRVTESHPEKLLADIMRVDPQEIIVADSFFHDKSHKSLFNVLDRIVSPQHVSLFDAVTAERDICSYFKLSTLEGVADYSRSELSAIAAAIRYIEKTQITHRPPLMRPERQNENATLFIDAATRLSLELIRTTSGQRDGSLLKAIDRTVTGGGSRLLVDRLIAPLTTPSAIDKRLDSIAFFLRNTSLAEAIQLILKGGPDMPRAVSRLALGRGGPRDIASIQRGFEIIHGLNQLLNNELLPQEISDVQQVFSHLPTALHFRLEQALSDDLPLLKRDGGFIRPNYHKELDEMRALRDESRLIIAELQAQYAKETDIKTLKIKHNNILGYFIEITNLQATALTNTPQAKARFIHRQTLANVMRFTTTELVELEGRIAHAATHAMTLELEIFDTLVHEITEQVDFIRKAAEALAILDVSVALARLAEEQEYCRPKIDQSLTFRITAGRHPVVEQALRKQAAEPFVANNCDLSVQKNHQYAAIWLLTGPNMGGKSTFLRQNALITIMAQMGSFVPASSAHIGVVDRLFSRVGASDDLARGRSTFMMEMVETATILNHASSHSLVILDEIGRGTSTFDGLSIAWAAVEYLHEVNQCRAILATHFHEMTALTEKLDRLYNVTMKVKNWDGDVVFLHEVMPGAADRSYGVQVAKLAGLPTAVITRATDVLHQLEQGETAGKGNKLIDDLPLFSLKTTSLINEETNKHCMLHEALKNIYPDELSPKEALEVLYRLKQLEKK</sequence>
<reference key="1">
    <citation type="journal article" date="2004" name="Proc. Natl. Acad. Sci. U.S.A.">
        <title>The louse-borne human pathogen Bartonella quintana is a genomic derivative of the zoonotic agent Bartonella henselae.</title>
        <authorList>
            <person name="Alsmark U.C.M."/>
            <person name="Frank A.C."/>
            <person name="Karlberg E.O."/>
            <person name="Legault B.-A."/>
            <person name="Ardell D.H."/>
            <person name="Canbaeck B."/>
            <person name="Eriksson A.-S."/>
            <person name="Naeslund A.K."/>
            <person name="Handley S.A."/>
            <person name="Huvet M."/>
            <person name="La Scola B."/>
            <person name="Holmberg M."/>
            <person name="Andersson S.G.E."/>
        </authorList>
    </citation>
    <scope>NUCLEOTIDE SEQUENCE [LARGE SCALE GENOMIC DNA]</scope>
    <source>
        <strain>Toulouse</strain>
    </source>
</reference>
<keyword id="KW-0067">ATP-binding</keyword>
<keyword id="KW-0227">DNA damage</keyword>
<keyword id="KW-0234">DNA repair</keyword>
<keyword id="KW-0238">DNA-binding</keyword>
<keyword id="KW-0547">Nucleotide-binding</keyword>
<proteinExistence type="inferred from homology"/>
<comment type="function">
    <text evidence="1">This protein is involved in the repair of mismatches in DNA. It is possible that it carries out the mismatch recognition step. This protein has a weak ATPase activity.</text>
</comment>
<comment type="similarity">
    <text evidence="1">Belongs to the DNA mismatch repair MutS family.</text>
</comment>
<evidence type="ECO:0000255" key="1">
    <source>
        <dbReference type="HAMAP-Rule" id="MF_00096"/>
    </source>
</evidence>
<evidence type="ECO:0000256" key="2">
    <source>
        <dbReference type="SAM" id="MobiDB-lite"/>
    </source>
</evidence>
<dbReference type="EMBL" id="BX897700">
    <property type="protein sequence ID" value="CAF25599.1"/>
    <property type="molecule type" value="Genomic_DNA"/>
</dbReference>
<dbReference type="RefSeq" id="WP_011178924.1">
    <property type="nucleotide sequence ID" value="NC_005955.1"/>
</dbReference>
<dbReference type="SMR" id="Q6G0X1"/>
<dbReference type="KEGG" id="bqu:BQ00930"/>
<dbReference type="eggNOG" id="COG0249">
    <property type="taxonomic scope" value="Bacteria"/>
</dbReference>
<dbReference type="HOGENOM" id="CLU_002472_3_1_5"/>
<dbReference type="OrthoDB" id="9802448at2"/>
<dbReference type="Proteomes" id="UP000000597">
    <property type="component" value="Chromosome"/>
</dbReference>
<dbReference type="GO" id="GO:0005829">
    <property type="term" value="C:cytosol"/>
    <property type="evidence" value="ECO:0007669"/>
    <property type="project" value="TreeGrafter"/>
</dbReference>
<dbReference type="GO" id="GO:0005524">
    <property type="term" value="F:ATP binding"/>
    <property type="evidence" value="ECO:0007669"/>
    <property type="project" value="UniProtKB-UniRule"/>
</dbReference>
<dbReference type="GO" id="GO:0140664">
    <property type="term" value="F:ATP-dependent DNA damage sensor activity"/>
    <property type="evidence" value="ECO:0007669"/>
    <property type="project" value="InterPro"/>
</dbReference>
<dbReference type="GO" id="GO:0003684">
    <property type="term" value="F:damaged DNA binding"/>
    <property type="evidence" value="ECO:0007669"/>
    <property type="project" value="UniProtKB-UniRule"/>
</dbReference>
<dbReference type="GO" id="GO:0030983">
    <property type="term" value="F:mismatched DNA binding"/>
    <property type="evidence" value="ECO:0007669"/>
    <property type="project" value="InterPro"/>
</dbReference>
<dbReference type="GO" id="GO:0006298">
    <property type="term" value="P:mismatch repair"/>
    <property type="evidence" value="ECO:0007669"/>
    <property type="project" value="UniProtKB-UniRule"/>
</dbReference>
<dbReference type="CDD" id="cd03284">
    <property type="entry name" value="ABC_MutS1"/>
    <property type="match status" value="1"/>
</dbReference>
<dbReference type="FunFam" id="3.40.1170.10:FF:000001">
    <property type="entry name" value="DNA mismatch repair protein MutS"/>
    <property type="match status" value="1"/>
</dbReference>
<dbReference type="FunFam" id="3.40.50.300:FF:000870">
    <property type="entry name" value="MutS protein homolog 4"/>
    <property type="match status" value="1"/>
</dbReference>
<dbReference type="Gene3D" id="1.10.1420.10">
    <property type="match status" value="2"/>
</dbReference>
<dbReference type="Gene3D" id="6.10.140.430">
    <property type="match status" value="1"/>
</dbReference>
<dbReference type="Gene3D" id="3.40.1170.10">
    <property type="entry name" value="DNA repair protein MutS, domain I"/>
    <property type="match status" value="1"/>
</dbReference>
<dbReference type="Gene3D" id="3.30.420.110">
    <property type="entry name" value="MutS, connector domain"/>
    <property type="match status" value="1"/>
</dbReference>
<dbReference type="Gene3D" id="3.40.50.300">
    <property type="entry name" value="P-loop containing nucleotide triphosphate hydrolases"/>
    <property type="match status" value="1"/>
</dbReference>
<dbReference type="HAMAP" id="MF_00096">
    <property type="entry name" value="MutS"/>
    <property type="match status" value="1"/>
</dbReference>
<dbReference type="InterPro" id="IPR005748">
    <property type="entry name" value="DNA_mismatch_repair_MutS"/>
</dbReference>
<dbReference type="InterPro" id="IPR007695">
    <property type="entry name" value="DNA_mismatch_repair_MutS-lik_N"/>
</dbReference>
<dbReference type="InterPro" id="IPR017261">
    <property type="entry name" value="DNA_mismatch_repair_MutS/MSH"/>
</dbReference>
<dbReference type="InterPro" id="IPR000432">
    <property type="entry name" value="DNA_mismatch_repair_MutS_C"/>
</dbReference>
<dbReference type="InterPro" id="IPR007861">
    <property type="entry name" value="DNA_mismatch_repair_MutS_clamp"/>
</dbReference>
<dbReference type="InterPro" id="IPR007696">
    <property type="entry name" value="DNA_mismatch_repair_MutS_core"/>
</dbReference>
<dbReference type="InterPro" id="IPR016151">
    <property type="entry name" value="DNA_mismatch_repair_MutS_N"/>
</dbReference>
<dbReference type="InterPro" id="IPR036187">
    <property type="entry name" value="DNA_mismatch_repair_MutS_sf"/>
</dbReference>
<dbReference type="InterPro" id="IPR007860">
    <property type="entry name" value="DNA_mmatch_repair_MutS_con_dom"/>
</dbReference>
<dbReference type="InterPro" id="IPR045076">
    <property type="entry name" value="MutS"/>
</dbReference>
<dbReference type="InterPro" id="IPR036678">
    <property type="entry name" value="MutS_con_dom_sf"/>
</dbReference>
<dbReference type="InterPro" id="IPR027417">
    <property type="entry name" value="P-loop_NTPase"/>
</dbReference>
<dbReference type="NCBIfam" id="TIGR01070">
    <property type="entry name" value="mutS1"/>
    <property type="match status" value="1"/>
</dbReference>
<dbReference type="NCBIfam" id="NF003810">
    <property type="entry name" value="PRK05399.1"/>
    <property type="match status" value="1"/>
</dbReference>
<dbReference type="PANTHER" id="PTHR11361:SF34">
    <property type="entry name" value="DNA MISMATCH REPAIR PROTEIN MSH1, MITOCHONDRIAL"/>
    <property type="match status" value="1"/>
</dbReference>
<dbReference type="PANTHER" id="PTHR11361">
    <property type="entry name" value="DNA MISMATCH REPAIR PROTEIN MUTS FAMILY MEMBER"/>
    <property type="match status" value="1"/>
</dbReference>
<dbReference type="Pfam" id="PF01624">
    <property type="entry name" value="MutS_I"/>
    <property type="match status" value="1"/>
</dbReference>
<dbReference type="Pfam" id="PF05188">
    <property type="entry name" value="MutS_II"/>
    <property type="match status" value="1"/>
</dbReference>
<dbReference type="Pfam" id="PF05192">
    <property type="entry name" value="MutS_III"/>
    <property type="match status" value="1"/>
</dbReference>
<dbReference type="Pfam" id="PF05190">
    <property type="entry name" value="MutS_IV"/>
    <property type="match status" value="1"/>
</dbReference>
<dbReference type="Pfam" id="PF00488">
    <property type="entry name" value="MutS_V"/>
    <property type="match status" value="1"/>
</dbReference>
<dbReference type="PIRSF" id="PIRSF037677">
    <property type="entry name" value="DNA_mis_repair_Msh6"/>
    <property type="match status" value="1"/>
</dbReference>
<dbReference type="SMART" id="SM00534">
    <property type="entry name" value="MUTSac"/>
    <property type="match status" value="1"/>
</dbReference>
<dbReference type="SMART" id="SM00533">
    <property type="entry name" value="MUTSd"/>
    <property type="match status" value="1"/>
</dbReference>
<dbReference type="SUPFAM" id="SSF55271">
    <property type="entry name" value="DNA repair protein MutS, domain I"/>
    <property type="match status" value="1"/>
</dbReference>
<dbReference type="SUPFAM" id="SSF53150">
    <property type="entry name" value="DNA repair protein MutS, domain II"/>
    <property type="match status" value="1"/>
</dbReference>
<dbReference type="SUPFAM" id="SSF48334">
    <property type="entry name" value="DNA repair protein MutS, domain III"/>
    <property type="match status" value="1"/>
</dbReference>
<dbReference type="SUPFAM" id="SSF52540">
    <property type="entry name" value="P-loop containing nucleoside triphosphate hydrolases"/>
    <property type="match status" value="1"/>
</dbReference>
<dbReference type="PROSITE" id="PS00486">
    <property type="entry name" value="DNA_MISMATCH_REPAIR_2"/>
    <property type="match status" value="1"/>
</dbReference>
<protein>
    <recommendedName>
        <fullName evidence="1">DNA mismatch repair protein MutS</fullName>
    </recommendedName>
</protein>
<name>MUTS_BARQU</name>
<accession>Q6G0X1</accession>
<organism>
    <name type="scientific">Bartonella quintana (strain Toulouse)</name>
    <name type="common">Rochalimaea quintana</name>
    <dbReference type="NCBI Taxonomy" id="283165"/>
    <lineage>
        <taxon>Bacteria</taxon>
        <taxon>Pseudomonadati</taxon>
        <taxon>Pseudomonadota</taxon>
        <taxon>Alphaproteobacteria</taxon>
        <taxon>Hyphomicrobiales</taxon>
        <taxon>Bartonellaceae</taxon>
        <taxon>Bartonella</taxon>
    </lineage>
</organism>